<organism>
    <name type="scientific">Rhizobium leguminosarum bv. trifolii (strain WSM2304)</name>
    <dbReference type="NCBI Taxonomy" id="395492"/>
    <lineage>
        <taxon>Bacteria</taxon>
        <taxon>Pseudomonadati</taxon>
        <taxon>Pseudomonadota</taxon>
        <taxon>Alphaproteobacteria</taxon>
        <taxon>Hyphomicrobiales</taxon>
        <taxon>Rhizobiaceae</taxon>
        <taxon>Rhizobium/Agrobacterium group</taxon>
        <taxon>Rhizobium</taxon>
    </lineage>
</organism>
<accession>B5ZZ58</accession>
<protein>
    <recommendedName>
        <fullName evidence="1">Large ribosomal subunit protein bL17</fullName>
    </recommendedName>
    <alternativeName>
        <fullName evidence="2">50S ribosomal protein L17</fullName>
    </alternativeName>
</protein>
<dbReference type="EMBL" id="CP001191">
    <property type="protein sequence ID" value="ACI54651.1"/>
    <property type="molecule type" value="Genomic_DNA"/>
</dbReference>
<dbReference type="RefSeq" id="WP_003573769.1">
    <property type="nucleotide sequence ID" value="NC_011369.1"/>
</dbReference>
<dbReference type="SMR" id="B5ZZ58"/>
<dbReference type="STRING" id="395492.Rleg2_1357"/>
<dbReference type="GeneID" id="75219584"/>
<dbReference type="KEGG" id="rlt:Rleg2_1357"/>
<dbReference type="eggNOG" id="COG0203">
    <property type="taxonomic scope" value="Bacteria"/>
</dbReference>
<dbReference type="HOGENOM" id="CLU_074407_2_0_5"/>
<dbReference type="Proteomes" id="UP000008330">
    <property type="component" value="Chromosome"/>
</dbReference>
<dbReference type="GO" id="GO:0022625">
    <property type="term" value="C:cytosolic large ribosomal subunit"/>
    <property type="evidence" value="ECO:0007669"/>
    <property type="project" value="TreeGrafter"/>
</dbReference>
<dbReference type="GO" id="GO:0003735">
    <property type="term" value="F:structural constituent of ribosome"/>
    <property type="evidence" value="ECO:0007669"/>
    <property type="project" value="InterPro"/>
</dbReference>
<dbReference type="GO" id="GO:0006412">
    <property type="term" value="P:translation"/>
    <property type="evidence" value="ECO:0007669"/>
    <property type="project" value="UniProtKB-UniRule"/>
</dbReference>
<dbReference type="FunFam" id="3.90.1030.10:FF:000001">
    <property type="entry name" value="50S ribosomal protein L17"/>
    <property type="match status" value="1"/>
</dbReference>
<dbReference type="Gene3D" id="3.90.1030.10">
    <property type="entry name" value="Ribosomal protein L17"/>
    <property type="match status" value="1"/>
</dbReference>
<dbReference type="HAMAP" id="MF_01368">
    <property type="entry name" value="Ribosomal_bL17"/>
    <property type="match status" value="1"/>
</dbReference>
<dbReference type="InterPro" id="IPR000456">
    <property type="entry name" value="Ribosomal_bL17"/>
</dbReference>
<dbReference type="InterPro" id="IPR047859">
    <property type="entry name" value="Ribosomal_bL17_CS"/>
</dbReference>
<dbReference type="InterPro" id="IPR036373">
    <property type="entry name" value="Ribosomal_bL17_sf"/>
</dbReference>
<dbReference type="NCBIfam" id="TIGR00059">
    <property type="entry name" value="L17"/>
    <property type="match status" value="1"/>
</dbReference>
<dbReference type="PANTHER" id="PTHR14413:SF16">
    <property type="entry name" value="LARGE RIBOSOMAL SUBUNIT PROTEIN BL17M"/>
    <property type="match status" value="1"/>
</dbReference>
<dbReference type="PANTHER" id="PTHR14413">
    <property type="entry name" value="RIBOSOMAL PROTEIN L17"/>
    <property type="match status" value="1"/>
</dbReference>
<dbReference type="Pfam" id="PF01196">
    <property type="entry name" value="Ribosomal_L17"/>
    <property type="match status" value="1"/>
</dbReference>
<dbReference type="SUPFAM" id="SSF64263">
    <property type="entry name" value="Prokaryotic ribosomal protein L17"/>
    <property type="match status" value="1"/>
</dbReference>
<dbReference type="PROSITE" id="PS01167">
    <property type="entry name" value="RIBOSOMAL_L17"/>
    <property type="match status" value="1"/>
</dbReference>
<evidence type="ECO:0000255" key="1">
    <source>
        <dbReference type="HAMAP-Rule" id="MF_01368"/>
    </source>
</evidence>
<evidence type="ECO:0000305" key="2"/>
<name>RL17_RHILW</name>
<sequence length="140" mass="15331">MRHGKAGRKLNRTASHRKAMFANMAASLITHEQIVTTLPKAKEIRPIVEKLVTLGKRGDLHARRQAISQIRDAAVVSKLFDTIATRYATRNGGYLRIMKAGFRQGDNAAMAVVEFVDRDTFAKGAADKARVAAEEQAVAA</sequence>
<proteinExistence type="inferred from homology"/>
<feature type="chain" id="PRO_1000144472" description="Large ribosomal subunit protein bL17">
    <location>
        <begin position="1"/>
        <end position="140"/>
    </location>
</feature>
<comment type="subunit">
    <text evidence="1">Part of the 50S ribosomal subunit. Contacts protein L32.</text>
</comment>
<comment type="similarity">
    <text evidence="1">Belongs to the bacterial ribosomal protein bL17 family.</text>
</comment>
<keyword id="KW-1185">Reference proteome</keyword>
<keyword id="KW-0687">Ribonucleoprotein</keyword>
<keyword id="KW-0689">Ribosomal protein</keyword>
<reference key="1">
    <citation type="journal article" date="2010" name="Stand. Genomic Sci.">
        <title>Complete genome sequence of Rhizobium leguminosarum bv trifolii strain WSM2304, an effective microsymbiont of the South American clover Trifolium polymorphum.</title>
        <authorList>
            <person name="Reeve W."/>
            <person name="O'Hara G."/>
            <person name="Chain P."/>
            <person name="Ardley J."/>
            <person name="Brau L."/>
            <person name="Nandesena K."/>
            <person name="Tiwari R."/>
            <person name="Malfatti S."/>
            <person name="Kiss H."/>
            <person name="Lapidus A."/>
            <person name="Copeland A."/>
            <person name="Nolan M."/>
            <person name="Land M."/>
            <person name="Ivanova N."/>
            <person name="Mavromatis K."/>
            <person name="Markowitz V."/>
            <person name="Kyrpides N."/>
            <person name="Melino V."/>
            <person name="Denton M."/>
            <person name="Yates R."/>
            <person name="Howieson J."/>
        </authorList>
    </citation>
    <scope>NUCLEOTIDE SEQUENCE [LARGE SCALE GENOMIC DNA]</scope>
    <source>
        <strain>WSM2304</strain>
    </source>
</reference>
<gene>
    <name evidence="1" type="primary">rplQ</name>
    <name type="ordered locus">Rleg2_1357</name>
</gene>